<name>IORF_CVBLU</name>
<feature type="chain" id="PRO_0000284095" description="Protein I">
    <location>
        <begin position="1"/>
        <end position="207"/>
    </location>
</feature>
<organismHost>
    <name type="scientific">Bos taurus</name>
    <name type="common">Bovine</name>
    <dbReference type="NCBI Taxonomy" id="9913"/>
</organismHost>
<sequence length="207" mass="23015">MASLSGPISPINLEMFKPGVEELNPSKLLLLSNHQEGMLYPTILGSLELLSFKRERSLNLQRDKVCLLHQESQLLKLRGTGTDTTDVPLKQPMATSVNCCHDGIFTILEQDRMPKTSMAPTLTESTGSLVTRLMSIPRLTFSIGTQVAMRLFRLGFRLARYSLRVTILKAQEGLLLIPDLLHAHPVEPLVQDRAVEPILAIEPLPLV</sequence>
<protein>
    <recommendedName>
        <fullName>Protein I</fullName>
    </recommendedName>
    <alternativeName>
        <fullName>Accessory protein N2</fullName>
    </alternativeName>
    <alternativeName>
        <fullName>N internal ORF protein</fullName>
        <shortName>IORF</shortName>
    </alternativeName>
    <alternativeName>
        <fullName>Protein in nucleocapsid ORF</fullName>
    </alternativeName>
</protein>
<comment type="function">
    <text evidence="1">Structural protein that is not essential for the viral replication either in tissue culture or in its natural host.</text>
</comment>
<comment type="subcellular location">
    <subcellularLocation>
        <location evidence="1">Virion</location>
    </subcellularLocation>
</comment>
<comment type="miscellaneous">
    <text>The gene encoding this protein is included within the N gene (alternative ORF).</text>
</comment>
<comment type="similarity">
    <text evidence="2">Belongs to the coronavirus I protein family.</text>
</comment>
<reference key="1">
    <citation type="journal article" date="2001" name="J. Gen. Virol.">
        <title>Comparison of genomic and predicted amino acid sequences of respiratory and enteric bovine coronaviruses isolated from the same animal with fatal shipping pneumonia.</title>
        <authorList>
            <person name="Chouljenko V.N."/>
            <person name="Lin X.Q."/>
            <person name="Storz J."/>
            <person name="Kousoulas K.G."/>
            <person name="Gorbalenya A.E."/>
        </authorList>
    </citation>
    <scope>NUCLEOTIDE SEQUENCE [GENOMIC RNA]</scope>
</reference>
<keyword id="KW-0946">Virion</keyword>
<accession>Q8V431</accession>
<gene>
    <name type="primary">N</name>
    <name type="synonym">I</name>
    <name type="ORF">7b</name>
</gene>
<proteinExistence type="inferred from homology"/>
<evidence type="ECO:0000250" key="1"/>
<evidence type="ECO:0000305" key="2"/>
<dbReference type="EMBL" id="AF391542">
    <property type="protein sequence ID" value="AAL57314.1"/>
    <property type="molecule type" value="Genomic_RNA"/>
</dbReference>
<dbReference type="Proteomes" id="UP000008571">
    <property type="component" value="Genome"/>
</dbReference>
<dbReference type="GO" id="GO:0044423">
    <property type="term" value="C:virion component"/>
    <property type="evidence" value="ECO:0007669"/>
    <property type="project" value="UniProtKB-KW"/>
</dbReference>
<dbReference type="CDD" id="cd21662">
    <property type="entry name" value="embe-CoV_Protein-I_like"/>
    <property type="match status" value="1"/>
</dbReference>
<dbReference type="InterPro" id="IPR004876">
    <property type="entry name" value="Corona_nucI"/>
</dbReference>
<dbReference type="InterPro" id="IPR044311">
    <property type="entry name" value="N2-like_embe-CoV"/>
</dbReference>
<dbReference type="Pfam" id="PF03187">
    <property type="entry name" value="Corona_I"/>
    <property type="match status" value="1"/>
</dbReference>
<organism>
    <name type="scientific">Bovine coronavirus (strain 98TXSF-110-LUN)</name>
    <name type="common">BCoV-LUN</name>
    <name type="synonym">BCV</name>
    <dbReference type="NCBI Taxonomy" id="233264"/>
    <lineage>
        <taxon>Viruses</taxon>
        <taxon>Riboviria</taxon>
        <taxon>Orthornavirae</taxon>
        <taxon>Pisuviricota</taxon>
        <taxon>Pisoniviricetes</taxon>
        <taxon>Nidovirales</taxon>
        <taxon>Cornidovirineae</taxon>
        <taxon>Coronaviridae</taxon>
        <taxon>Orthocoronavirinae</taxon>
        <taxon>Betacoronavirus</taxon>
        <taxon>Embecovirus</taxon>
        <taxon>Betacoronavirus 1</taxon>
    </lineage>
</organism>